<proteinExistence type="inferred from homology"/>
<keyword id="KW-0150">Chloroplast</keyword>
<keyword id="KW-0934">Plastid</keyword>
<keyword id="KW-1185">Reference proteome</keyword>
<keyword id="KW-0687">Ribonucleoprotein</keyword>
<keyword id="KW-0689">Ribosomal protein</keyword>
<evidence type="ECO:0000250" key="1"/>
<evidence type="ECO:0000305" key="2"/>
<gene>
    <name type="primary">rps15-A</name>
</gene>
<gene>
    <name type="primary">rps15</name>
    <name type="synonym">rps15-B</name>
</gene>
<geneLocation type="chloroplast"/>
<feature type="chain" id="PRO_0000115657" description="Small ribosomal subunit protein uS15c">
    <location>
        <begin position="1"/>
        <end position="90"/>
    </location>
</feature>
<feature type="sequence conflict" description="In Ref. 2; CAA36843/CAA60355/CAA60345." evidence="2" ref="2">
    <original>E</original>
    <variation>Q</variation>
    <location>
        <position position="19"/>
    </location>
</feature>
<dbReference type="EMBL" id="X52614">
    <property type="protein sequence ID" value="CAA36843.1"/>
    <property type="status" value="ALT_INIT"/>
    <property type="molecule type" value="Genomic_DNA"/>
</dbReference>
<dbReference type="EMBL" id="X86563">
    <property type="protein sequence ID" value="CAA60355.1"/>
    <property type="status" value="ALT_INIT"/>
    <property type="molecule type" value="Genomic_DNA"/>
</dbReference>
<dbReference type="EMBL" id="X86563">
    <property type="protein sequence ID" value="CAA60345.1"/>
    <property type="status" value="ALT_INIT"/>
    <property type="molecule type" value="Genomic_DNA"/>
</dbReference>
<dbReference type="PIR" id="S10153">
    <property type="entry name" value="R3ZM15"/>
</dbReference>
<dbReference type="RefSeq" id="NP_043083.1">
    <property type="nucleotide sequence ID" value="NC_001666.2"/>
</dbReference>
<dbReference type="RefSeq" id="NP_043094.1">
    <property type="nucleotide sequence ID" value="NC_001666.2"/>
</dbReference>
<dbReference type="SMR" id="P17703"/>
<dbReference type="FunCoup" id="P17703">
    <property type="interactions" value="289"/>
</dbReference>
<dbReference type="STRING" id="4577.P17703"/>
<dbReference type="PaxDb" id="4577-GRMZM2G053653_P01"/>
<dbReference type="GeneID" id="845230"/>
<dbReference type="GeneID" id="845231"/>
<dbReference type="KEGG" id="zma:845230"/>
<dbReference type="KEGG" id="zma:845231"/>
<dbReference type="MaizeGDB" id="67129"/>
<dbReference type="eggNOG" id="KOG2815">
    <property type="taxonomic scope" value="Eukaryota"/>
</dbReference>
<dbReference type="InParanoid" id="P17703"/>
<dbReference type="OrthoDB" id="364880at2759"/>
<dbReference type="Proteomes" id="UP000007305">
    <property type="component" value="Chloroplast"/>
</dbReference>
<dbReference type="GO" id="GO:0009507">
    <property type="term" value="C:chloroplast"/>
    <property type="evidence" value="ECO:0007669"/>
    <property type="project" value="UniProtKB-SubCell"/>
</dbReference>
<dbReference type="GO" id="GO:1990904">
    <property type="term" value="C:ribonucleoprotein complex"/>
    <property type="evidence" value="ECO:0007669"/>
    <property type="project" value="UniProtKB-KW"/>
</dbReference>
<dbReference type="GO" id="GO:0005840">
    <property type="term" value="C:ribosome"/>
    <property type="evidence" value="ECO:0007669"/>
    <property type="project" value="UniProtKB-KW"/>
</dbReference>
<dbReference type="GO" id="GO:0003735">
    <property type="term" value="F:structural constituent of ribosome"/>
    <property type="evidence" value="ECO:0007669"/>
    <property type="project" value="InterPro"/>
</dbReference>
<dbReference type="GO" id="GO:0006412">
    <property type="term" value="P:translation"/>
    <property type="evidence" value="ECO:0007669"/>
    <property type="project" value="UniProtKB-UniRule"/>
</dbReference>
<dbReference type="CDD" id="cd00353">
    <property type="entry name" value="Ribosomal_S15p_S13e"/>
    <property type="match status" value="1"/>
</dbReference>
<dbReference type="Gene3D" id="1.10.287.10">
    <property type="entry name" value="S15/NS1, RNA-binding"/>
    <property type="match status" value="1"/>
</dbReference>
<dbReference type="HAMAP" id="MF_01343_B">
    <property type="entry name" value="Ribosomal_uS15_B"/>
    <property type="match status" value="1"/>
</dbReference>
<dbReference type="InterPro" id="IPR000589">
    <property type="entry name" value="Ribosomal_uS15"/>
</dbReference>
<dbReference type="InterPro" id="IPR005290">
    <property type="entry name" value="Ribosomal_uS15_bac-type"/>
</dbReference>
<dbReference type="InterPro" id="IPR009068">
    <property type="entry name" value="uS15_NS1_RNA-bd_sf"/>
</dbReference>
<dbReference type="NCBIfam" id="TIGR00952">
    <property type="entry name" value="S15_bact"/>
    <property type="match status" value="1"/>
</dbReference>
<dbReference type="PANTHER" id="PTHR23321">
    <property type="entry name" value="RIBOSOMAL PROTEIN S15, BACTERIAL AND ORGANELLAR"/>
    <property type="match status" value="1"/>
</dbReference>
<dbReference type="PANTHER" id="PTHR23321:SF26">
    <property type="entry name" value="SMALL RIBOSOMAL SUBUNIT PROTEIN US15M"/>
    <property type="match status" value="1"/>
</dbReference>
<dbReference type="Pfam" id="PF00312">
    <property type="entry name" value="Ribosomal_S15"/>
    <property type="match status" value="1"/>
</dbReference>
<dbReference type="SMART" id="SM01387">
    <property type="entry name" value="Ribosomal_S15"/>
    <property type="match status" value="1"/>
</dbReference>
<dbReference type="SUPFAM" id="SSF47060">
    <property type="entry name" value="S15/NS1 RNA-binding domain"/>
    <property type="match status" value="1"/>
</dbReference>
<dbReference type="PROSITE" id="PS00362">
    <property type="entry name" value="RIBOSOMAL_S15"/>
    <property type="match status" value="1"/>
</dbReference>
<accession>P17703</accession>
<comment type="subunit">
    <text evidence="1">Part of the 30S ribosomal subunit.</text>
</comment>
<comment type="subcellular location">
    <subcellularLocation>
        <location>Plastid</location>
        <location>Chloroplast</location>
    </subcellularLocation>
</comment>
<comment type="similarity">
    <text evidence="2">Belongs to the universal ribosomal protein uS15 family.</text>
</comment>
<comment type="sequence caution" evidence="2">
    <conflict type="erroneous initiation">
        <sequence resource="EMBL-CDS" id="CAA36843"/>
    </conflict>
</comment>
<comment type="sequence caution" evidence="2">
    <conflict type="erroneous initiation">
        <sequence resource="EMBL-CDS" id="CAA60345"/>
    </conflict>
</comment>
<comment type="sequence caution" evidence="2">
    <conflict type="erroneous initiation">
        <sequence resource="EMBL-CDS" id="CAA60355"/>
    </conflict>
</comment>
<name>RR15_MAIZE</name>
<organism>
    <name type="scientific">Zea mays</name>
    <name type="common">Maize</name>
    <dbReference type="NCBI Taxonomy" id="4577"/>
    <lineage>
        <taxon>Eukaryota</taxon>
        <taxon>Viridiplantae</taxon>
        <taxon>Streptophyta</taxon>
        <taxon>Embryophyta</taxon>
        <taxon>Tracheophyta</taxon>
        <taxon>Spermatophyta</taxon>
        <taxon>Magnoliopsida</taxon>
        <taxon>Liliopsida</taxon>
        <taxon>Poales</taxon>
        <taxon>Poaceae</taxon>
        <taxon>PACMAD clade</taxon>
        <taxon>Panicoideae</taxon>
        <taxon>Andropogonodae</taxon>
        <taxon>Andropogoneae</taxon>
        <taxon>Tripsacinae</taxon>
        <taxon>Zea</taxon>
    </lineage>
</organism>
<protein>
    <recommendedName>
        <fullName evidence="2">Small ribosomal subunit protein uS15c</fullName>
    </recommendedName>
    <alternativeName>
        <fullName>30S ribosomal protein S15, chloroplastic</fullName>
    </alternativeName>
</protein>
<sequence length="90" mass="10824">MKKKGGRKIFGFMVKEEKEENRGSVEFQVFSFTNKIRRLASHLELHKKDFSSERGLRRLLGKRQRLLAYLAKKNRVRYKKLISQLDIREK</sequence>
<reference key="1">
    <citation type="journal article" date="1990" name="Nucleic Acids Res.">
        <title>Nucleotide sequence and map positions of the duplicated gene for chloroplast ribosomal protein S15 in Zea mays (maize).</title>
        <authorList>
            <person name="Fitzky B."/>
            <person name="Subramanian A.R."/>
        </authorList>
    </citation>
    <scope>NUCLEOTIDE SEQUENCE [LARGE SCALE GENOMIC DNA]</scope>
    <source>
        <strain>cv. B73</strain>
        <tissue>Leaf</tissue>
    </source>
</reference>
<reference key="2">
    <citation type="journal article" date="1995" name="J. Mol. Biol.">
        <title>Complete sequence of the maize chloroplast genome: gene content, hotspots of divergence and fine tuning of genetic information by transcript editing.</title>
        <authorList>
            <person name="Maier R.M."/>
            <person name="Neckermann K."/>
            <person name="Igloi G.L."/>
            <person name="Koessel H."/>
        </authorList>
    </citation>
    <scope>NUCLEOTIDE SEQUENCE [LARGE SCALE GENOMIC DNA]</scope>
    <source>
        <strain>cv. B73</strain>
    </source>
</reference>